<keyword id="KW-0963">Cytoplasm</keyword>
<keyword id="KW-0275">Fatty acid biosynthesis</keyword>
<keyword id="KW-0276">Fatty acid metabolism</keyword>
<keyword id="KW-0444">Lipid biosynthesis</keyword>
<keyword id="KW-0443">Lipid metabolism</keyword>
<keyword id="KW-0460">Magnesium</keyword>
<keyword id="KW-0479">Metal-binding</keyword>
<keyword id="KW-1185">Reference proteome</keyword>
<keyword id="KW-0808">Transferase</keyword>
<gene>
    <name evidence="1" type="primary">acpS</name>
    <name type="ordered locus">NT01CX_1261</name>
</gene>
<sequence>MIIGIGTDIVEIDRINKSIERTPNFINKLFTKKEIEYFISRKMRPEFIAGKFAAKESVAKALGTGFRKFGFRDIEIDKDELGKPLVHLSGGAKETANKFGDYKLHLSISHGRENAIAYAILEVDNNGNCNSSKDEGHR</sequence>
<proteinExistence type="inferred from homology"/>
<comment type="function">
    <text evidence="1">Transfers the 4'-phosphopantetheine moiety from coenzyme A to a Ser of acyl-carrier-protein.</text>
</comment>
<comment type="catalytic activity">
    <reaction evidence="1">
        <text>apo-[ACP] + CoA = holo-[ACP] + adenosine 3',5'-bisphosphate + H(+)</text>
        <dbReference type="Rhea" id="RHEA:12068"/>
        <dbReference type="Rhea" id="RHEA-COMP:9685"/>
        <dbReference type="Rhea" id="RHEA-COMP:9690"/>
        <dbReference type="ChEBI" id="CHEBI:15378"/>
        <dbReference type="ChEBI" id="CHEBI:29999"/>
        <dbReference type="ChEBI" id="CHEBI:57287"/>
        <dbReference type="ChEBI" id="CHEBI:58343"/>
        <dbReference type="ChEBI" id="CHEBI:64479"/>
        <dbReference type="EC" id="2.7.8.7"/>
    </reaction>
</comment>
<comment type="cofactor">
    <cofactor evidence="1">
        <name>Mg(2+)</name>
        <dbReference type="ChEBI" id="CHEBI:18420"/>
    </cofactor>
</comment>
<comment type="subcellular location">
    <subcellularLocation>
        <location evidence="1">Cytoplasm</location>
    </subcellularLocation>
</comment>
<comment type="similarity">
    <text evidence="1">Belongs to the P-Pant transferase superfamily. AcpS family.</text>
</comment>
<organism>
    <name type="scientific">Clostridium novyi (strain NT)</name>
    <dbReference type="NCBI Taxonomy" id="386415"/>
    <lineage>
        <taxon>Bacteria</taxon>
        <taxon>Bacillati</taxon>
        <taxon>Bacillota</taxon>
        <taxon>Clostridia</taxon>
        <taxon>Eubacteriales</taxon>
        <taxon>Clostridiaceae</taxon>
        <taxon>Clostridium</taxon>
    </lineage>
</organism>
<evidence type="ECO:0000255" key="1">
    <source>
        <dbReference type="HAMAP-Rule" id="MF_00101"/>
    </source>
</evidence>
<accession>A0PY92</accession>
<feature type="chain" id="PRO_1000008414" description="Holo-[acyl-carrier-protein] synthase">
    <location>
        <begin position="1"/>
        <end position="138"/>
    </location>
</feature>
<feature type="binding site" evidence="1">
    <location>
        <position position="8"/>
    </location>
    <ligand>
        <name>Mg(2+)</name>
        <dbReference type="ChEBI" id="CHEBI:18420"/>
    </ligand>
</feature>
<feature type="binding site" evidence="1">
    <location>
        <position position="56"/>
    </location>
    <ligand>
        <name>Mg(2+)</name>
        <dbReference type="ChEBI" id="CHEBI:18420"/>
    </ligand>
</feature>
<reference key="1">
    <citation type="journal article" date="2006" name="Nat. Biotechnol.">
        <title>The genome and transcriptomes of the anti-tumor agent Clostridium novyi-NT.</title>
        <authorList>
            <person name="Bettegowda C."/>
            <person name="Huang X."/>
            <person name="Lin J."/>
            <person name="Cheong I."/>
            <person name="Kohli M."/>
            <person name="Szabo S.A."/>
            <person name="Zhang X."/>
            <person name="Diaz L.A. Jr."/>
            <person name="Velculescu V.E."/>
            <person name="Parmigiani G."/>
            <person name="Kinzler K.W."/>
            <person name="Vogelstein B."/>
            <person name="Zhou S."/>
        </authorList>
    </citation>
    <scope>NUCLEOTIDE SEQUENCE [LARGE SCALE GENOMIC DNA]</scope>
    <source>
        <strain>NT</strain>
    </source>
</reference>
<protein>
    <recommendedName>
        <fullName evidence="1">Holo-[acyl-carrier-protein] synthase</fullName>
        <shortName evidence="1">Holo-ACP synthase</shortName>
        <ecNumber evidence="1">2.7.8.7</ecNumber>
    </recommendedName>
    <alternativeName>
        <fullName evidence="1">4'-phosphopantetheinyl transferase AcpS</fullName>
    </alternativeName>
</protein>
<dbReference type="EC" id="2.7.8.7" evidence="1"/>
<dbReference type="EMBL" id="CP000382">
    <property type="protein sequence ID" value="ABK60697.1"/>
    <property type="molecule type" value="Genomic_DNA"/>
</dbReference>
<dbReference type="RefSeq" id="WP_011721352.1">
    <property type="nucleotide sequence ID" value="NC_008593.1"/>
</dbReference>
<dbReference type="SMR" id="A0PY92"/>
<dbReference type="STRING" id="386415.NT01CX_1261"/>
<dbReference type="KEGG" id="cno:NT01CX_1261"/>
<dbReference type="eggNOG" id="COG0736">
    <property type="taxonomic scope" value="Bacteria"/>
</dbReference>
<dbReference type="HOGENOM" id="CLU_089696_0_2_9"/>
<dbReference type="Proteomes" id="UP000008220">
    <property type="component" value="Chromosome"/>
</dbReference>
<dbReference type="GO" id="GO:0005737">
    <property type="term" value="C:cytoplasm"/>
    <property type="evidence" value="ECO:0007669"/>
    <property type="project" value="UniProtKB-SubCell"/>
</dbReference>
<dbReference type="GO" id="GO:0008897">
    <property type="term" value="F:holo-[acyl-carrier-protein] synthase activity"/>
    <property type="evidence" value="ECO:0007669"/>
    <property type="project" value="UniProtKB-UniRule"/>
</dbReference>
<dbReference type="GO" id="GO:0000287">
    <property type="term" value="F:magnesium ion binding"/>
    <property type="evidence" value="ECO:0007669"/>
    <property type="project" value="UniProtKB-UniRule"/>
</dbReference>
<dbReference type="GO" id="GO:0006633">
    <property type="term" value="P:fatty acid biosynthetic process"/>
    <property type="evidence" value="ECO:0007669"/>
    <property type="project" value="UniProtKB-UniRule"/>
</dbReference>
<dbReference type="Gene3D" id="3.90.470.20">
    <property type="entry name" value="4'-phosphopantetheinyl transferase domain"/>
    <property type="match status" value="1"/>
</dbReference>
<dbReference type="HAMAP" id="MF_00101">
    <property type="entry name" value="AcpS"/>
    <property type="match status" value="1"/>
</dbReference>
<dbReference type="InterPro" id="IPR008278">
    <property type="entry name" value="4-PPantetheinyl_Trfase_dom"/>
</dbReference>
<dbReference type="InterPro" id="IPR037143">
    <property type="entry name" value="4-PPantetheinyl_Trfase_dom_sf"/>
</dbReference>
<dbReference type="InterPro" id="IPR002582">
    <property type="entry name" value="ACPS"/>
</dbReference>
<dbReference type="InterPro" id="IPR004568">
    <property type="entry name" value="Ppantetheine-prot_Trfase_dom"/>
</dbReference>
<dbReference type="NCBIfam" id="TIGR00516">
    <property type="entry name" value="acpS"/>
    <property type="match status" value="1"/>
</dbReference>
<dbReference type="NCBIfam" id="TIGR00556">
    <property type="entry name" value="pantethn_trn"/>
    <property type="match status" value="1"/>
</dbReference>
<dbReference type="Pfam" id="PF01648">
    <property type="entry name" value="ACPS"/>
    <property type="match status" value="1"/>
</dbReference>
<dbReference type="SUPFAM" id="SSF56214">
    <property type="entry name" value="4'-phosphopantetheinyl transferase"/>
    <property type="match status" value="1"/>
</dbReference>
<name>ACPS_CLONN</name>